<organism>
    <name type="scientific">Mus musculus</name>
    <name type="common">Mouse</name>
    <dbReference type="NCBI Taxonomy" id="10090"/>
    <lineage>
        <taxon>Eukaryota</taxon>
        <taxon>Metazoa</taxon>
        <taxon>Chordata</taxon>
        <taxon>Craniata</taxon>
        <taxon>Vertebrata</taxon>
        <taxon>Euteleostomi</taxon>
        <taxon>Mammalia</taxon>
        <taxon>Eutheria</taxon>
        <taxon>Euarchontoglires</taxon>
        <taxon>Glires</taxon>
        <taxon>Rodentia</taxon>
        <taxon>Myomorpha</taxon>
        <taxon>Muroidea</taxon>
        <taxon>Muridae</taxon>
        <taxon>Murinae</taxon>
        <taxon>Mus</taxon>
        <taxon>Mus</taxon>
    </lineage>
</organism>
<protein>
    <recommendedName>
        <fullName>LIM and senescent cell antigen-like-containing domain protein 2</fullName>
    </recommendedName>
    <alternativeName>
        <fullName>Particularly interesting new Cys-His protein 2</fullName>
        <shortName>PINCH-2</shortName>
    </alternativeName>
</protein>
<proteinExistence type="evidence at protein level"/>
<comment type="function">
    <text evidence="1">Adapter protein in a cytoplasmic complex linking beta-integrins to the actin cytoskeleton, bridges the complex to cell surface receptor tyrosine kinases and growth factor receptors.</text>
</comment>
<comment type="subunit">
    <text evidence="1 5">Interacts with integrin-linked protein kinase 1 (ILK) via the first LIM domain, and in competition with LIMS1. Part of the heterotrimeric IPP complex composed of integrin-linked kinase (ILK), LIMS1 or LIMS2, and PARVA (By similarity). Interacts with TGFB1I1.</text>
</comment>
<comment type="subcellular location">
    <subcellularLocation>
        <location evidence="4">Cell junction</location>
        <location evidence="4">Focal adhesion</location>
    </subcellularLocation>
    <subcellularLocation>
        <location evidence="4">Cell membrane</location>
        <topology evidence="4">Peripheral membrane protein</topology>
        <orientation evidence="4">Cytoplasmic side</orientation>
    </subcellularLocation>
</comment>
<comment type="tissue specificity">
    <text evidence="4">Detected in heart, lung, kidney, liver, urinary bladder, fat, skin, skeletal muscle, uterus, large intestine and testis.</text>
</comment>
<comment type="developmental stage">
    <text>Not detectable during early stages of embryogenesis. Detected at low levels at 14.5 dpc and 15.5 dpc. Highly expressed at 17.5 dpc.</text>
</comment>
<sequence length="341" mass="39031">MTGSNMSECLADAMCQRCQARFAPTERIVNSNGELYHEHCFVCAQCFRPFPEGLFYEFEGRKYCEHDFQMLFAPCCGFCGEFVIGRVIKAMNANWHPGCFRCELCDVELADLGFVKNAGRHLCRPCHNREKAKGLGKFICQRCHLAIDEQPLMFKNDPYHPDHFSCSNCGKELTSDARELKGELYCLPCHDKMGIPICGACRRPIEGRVVNALGKQWHVEHFVCAKCEKPFLGHRHYEKKGLAYCETHYNQLFGDVCYNCSHVIEGDVVSALSKAWCVNCFSCSTCNMKLTLKNKFVEFDMKPVCKRCYERFPLELKKRLKKLSDLSSRKAQPKSVDVNSL</sequence>
<accession>Q91XD2</accession>
<dbReference type="EMBL" id="AJ420860">
    <property type="protein sequence ID" value="CAD12820.1"/>
    <property type="molecule type" value="Genomic_DNA"/>
</dbReference>
<dbReference type="EMBL" id="AJ420861">
    <property type="protein sequence ID" value="CAD12820.1"/>
    <property type="status" value="JOINED"/>
    <property type="molecule type" value="Genomic_DNA"/>
</dbReference>
<dbReference type="EMBL" id="AJ420863">
    <property type="protein sequence ID" value="CAD12820.1"/>
    <property type="status" value="JOINED"/>
    <property type="molecule type" value="Genomic_DNA"/>
</dbReference>
<dbReference type="EMBL" id="AJ420862">
    <property type="protein sequence ID" value="CAD12820.1"/>
    <property type="status" value="JOINED"/>
    <property type="molecule type" value="Genomic_DNA"/>
</dbReference>
<dbReference type="EMBL" id="BC010816">
    <property type="protein sequence ID" value="AAH10816.1"/>
    <property type="molecule type" value="mRNA"/>
</dbReference>
<dbReference type="CCDS" id="CCDS29113.1"/>
<dbReference type="RefSeq" id="NP_659111.1">
    <property type="nucleotide sequence ID" value="NM_144862.4"/>
</dbReference>
<dbReference type="SMR" id="Q91XD2"/>
<dbReference type="BioGRID" id="230384">
    <property type="interactions" value="6"/>
</dbReference>
<dbReference type="FunCoup" id="Q91XD2">
    <property type="interactions" value="42"/>
</dbReference>
<dbReference type="STRING" id="10090.ENSMUSP00000025254"/>
<dbReference type="iPTMnet" id="Q91XD2"/>
<dbReference type="PhosphoSitePlus" id="Q91XD2"/>
<dbReference type="SwissPalm" id="Q91XD2"/>
<dbReference type="jPOST" id="Q91XD2"/>
<dbReference type="PaxDb" id="10090-ENSMUSP00000025254"/>
<dbReference type="PeptideAtlas" id="Q91XD2"/>
<dbReference type="ProteomicsDB" id="286205"/>
<dbReference type="Antibodypedia" id="55985">
    <property type="antibodies" value="148 antibodies from 22 providers"/>
</dbReference>
<dbReference type="DNASU" id="225341"/>
<dbReference type="Ensembl" id="ENSMUST00000025254.9">
    <property type="protein sequence ID" value="ENSMUSP00000025254.8"/>
    <property type="gene ID" value="ENSMUSG00000024395.10"/>
</dbReference>
<dbReference type="GeneID" id="225341"/>
<dbReference type="KEGG" id="mmu:225341"/>
<dbReference type="UCSC" id="uc008eiv.1">
    <property type="organism name" value="mouse"/>
</dbReference>
<dbReference type="AGR" id="MGI:2385067"/>
<dbReference type="CTD" id="55679"/>
<dbReference type="MGI" id="MGI:2385067">
    <property type="gene designation" value="Lims2"/>
</dbReference>
<dbReference type="VEuPathDB" id="HostDB:ENSMUSG00000024395"/>
<dbReference type="eggNOG" id="KOG2272">
    <property type="taxonomic scope" value="Eukaryota"/>
</dbReference>
<dbReference type="GeneTree" id="ENSGT00940000153518"/>
<dbReference type="HOGENOM" id="CLU_001357_0_0_1"/>
<dbReference type="InParanoid" id="Q91XD2"/>
<dbReference type="OMA" id="FHEHCFV"/>
<dbReference type="OrthoDB" id="20689at2759"/>
<dbReference type="PhylomeDB" id="Q91XD2"/>
<dbReference type="TreeFam" id="TF314113"/>
<dbReference type="Reactome" id="R-MMU-446353">
    <property type="pathway name" value="Cell-extracellular matrix interactions"/>
</dbReference>
<dbReference type="BioGRID-ORCS" id="225341">
    <property type="hits" value="1 hit in 75 CRISPR screens"/>
</dbReference>
<dbReference type="ChiTaRS" id="Lims2">
    <property type="organism name" value="mouse"/>
</dbReference>
<dbReference type="PRO" id="PR:Q91XD2"/>
<dbReference type="Proteomes" id="UP000000589">
    <property type="component" value="Chromosome 18"/>
</dbReference>
<dbReference type="RNAct" id="Q91XD2">
    <property type="molecule type" value="protein"/>
</dbReference>
<dbReference type="Bgee" id="ENSMUSG00000024395">
    <property type="expression patterns" value="Expressed in aorta tunica media and 171 other cell types or tissues"/>
</dbReference>
<dbReference type="ExpressionAtlas" id="Q91XD2">
    <property type="expression patterns" value="baseline and differential"/>
</dbReference>
<dbReference type="GO" id="GO:0005925">
    <property type="term" value="C:focal adhesion"/>
    <property type="evidence" value="ECO:0000314"/>
    <property type="project" value="MGI"/>
</dbReference>
<dbReference type="GO" id="GO:0005886">
    <property type="term" value="C:plasma membrane"/>
    <property type="evidence" value="ECO:0007669"/>
    <property type="project" value="UniProtKB-SubCell"/>
</dbReference>
<dbReference type="GO" id="GO:0046872">
    <property type="term" value="F:metal ion binding"/>
    <property type="evidence" value="ECO:0007669"/>
    <property type="project" value="UniProtKB-KW"/>
</dbReference>
<dbReference type="GO" id="GO:0098609">
    <property type="term" value="P:cell-cell adhesion"/>
    <property type="evidence" value="ECO:0000316"/>
    <property type="project" value="MGI"/>
</dbReference>
<dbReference type="GO" id="GO:0045216">
    <property type="term" value="P:cell-cell junction organization"/>
    <property type="evidence" value="ECO:0000316"/>
    <property type="project" value="MGI"/>
</dbReference>
<dbReference type="GO" id="GO:1990705">
    <property type="term" value="P:cholangiocyte proliferation"/>
    <property type="evidence" value="ECO:0000316"/>
    <property type="project" value="MGI"/>
</dbReference>
<dbReference type="GO" id="GO:0007229">
    <property type="term" value="P:integrin-mediated signaling pathway"/>
    <property type="evidence" value="ECO:0000316"/>
    <property type="project" value="MGI"/>
</dbReference>
<dbReference type="GO" id="GO:0043066">
    <property type="term" value="P:negative regulation of apoptotic process"/>
    <property type="evidence" value="ECO:0000316"/>
    <property type="project" value="MGI"/>
</dbReference>
<dbReference type="GO" id="GO:1904055">
    <property type="term" value="P:negative regulation of cholangiocyte proliferation"/>
    <property type="evidence" value="ECO:0000316"/>
    <property type="project" value="MGI"/>
</dbReference>
<dbReference type="GO" id="GO:2000346">
    <property type="term" value="P:negative regulation of hepatocyte proliferation"/>
    <property type="evidence" value="ECO:0000316"/>
    <property type="project" value="MGI"/>
</dbReference>
<dbReference type="GO" id="GO:2000178">
    <property type="term" value="P:negative regulation of neural precursor cell proliferation"/>
    <property type="evidence" value="ECO:0000316"/>
    <property type="project" value="MGI"/>
</dbReference>
<dbReference type="GO" id="GO:0061351">
    <property type="term" value="P:neural precursor cell proliferation"/>
    <property type="evidence" value="ECO:0000316"/>
    <property type="project" value="MGI"/>
</dbReference>
<dbReference type="GO" id="GO:2001046">
    <property type="term" value="P:positive regulation of integrin-mediated signaling pathway"/>
    <property type="evidence" value="ECO:0000316"/>
    <property type="project" value="MGI"/>
</dbReference>
<dbReference type="CDD" id="cd09331">
    <property type="entry name" value="LIM1_PINCH"/>
    <property type="match status" value="1"/>
</dbReference>
<dbReference type="CDD" id="cd09332">
    <property type="entry name" value="LIM2_PINCH"/>
    <property type="match status" value="1"/>
</dbReference>
<dbReference type="CDD" id="cd09333">
    <property type="entry name" value="LIM3_PINCH"/>
    <property type="match status" value="1"/>
</dbReference>
<dbReference type="CDD" id="cd09334">
    <property type="entry name" value="LIM4_PINCH"/>
    <property type="match status" value="1"/>
</dbReference>
<dbReference type="CDD" id="cd09335">
    <property type="entry name" value="LIM5_PINCH"/>
    <property type="match status" value="1"/>
</dbReference>
<dbReference type="FunFam" id="2.10.110.10:FF:000011">
    <property type="entry name" value="Lim and senescent cell antigen-like-containing"/>
    <property type="match status" value="1"/>
</dbReference>
<dbReference type="FunFam" id="2.10.110.10:FF:000017">
    <property type="entry name" value="Lim and senescent cell antigen-like-containing"/>
    <property type="match status" value="1"/>
</dbReference>
<dbReference type="FunFam" id="2.10.110.10:FF:000019">
    <property type="entry name" value="Lim and senescent cell antigen-like-containing"/>
    <property type="match status" value="1"/>
</dbReference>
<dbReference type="FunFam" id="2.10.110.10:FF:000021">
    <property type="entry name" value="Lim and senescent cell antigen-like-containing"/>
    <property type="match status" value="1"/>
</dbReference>
<dbReference type="FunFam" id="2.10.110.10:FF:000029">
    <property type="entry name" value="LIM and senescent cell antigen-like-containing domain protein"/>
    <property type="match status" value="1"/>
</dbReference>
<dbReference type="Gene3D" id="2.10.110.10">
    <property type="entry name" value="Cysteine Rich Protein"/>
    <property type="match status" value="5"/>
</dbReference>
<dbReference type="InterPro" id="IPR047944">
    <property type="entry name" value="LIMS1/2-like_LIM1"/>
</dbReference>
<dbReference type="InterPro" id="IPR017351">
    <property type="entry name" value="PINCH-1-4-like"/>
</dbReference>
<dbReference type="InterPro" id="IPR047946">
    <property type="entry name" value="PINCH-1/2-like"/>
</dbReference>
<dbReference type="InterPro" id="IPR001781">
    <property type="entry name" value="Znf_LIM"/>
</dbReference>
<dbReference type="PANTHER" id="PTHR24210:SF10">
    <property type="entry name" value="LIM AND SENESCENT CELL ANTIGEN-LIKE-CONTAINING DOMAIN PROTEIN 2"/>
    <property type="match status" value="1"/>
</dbReference>
<dbReference type="PANTHER" id="PTHR24210">
    <property type="entry name" value="LIM DOMAIN-CONTAINING PROTEIN"/>
    <property type="match status" value="1"/>
</dbReference>
<dbReference type="Pfam" id="PF00412">
    <property type="entry name" value="LIM"/>
    <property type="match status" value="5"/>
</dbReference>
<dbReference type="PIRSF" id="PIRSF038003">
    <property type="entry name" value="PINCH"/>
    <property type="match status" value="1"/>
</dbReference>
<dbReference type="SMART" id="SM00132">
    <property type="entry name" value="LIM"/>
    <property type="match status" value="5"/>
</dbReference>
<dbReference type="SUPFAM" id="SSF57716">
    <property type="entry name" value="Glucocorticoid receptor-like (DNA-binding domain)"/>
    <property type="match status" value="6"/>
</dbReference>
<dbReference type="PROSITE" id="PS00478">
    <property type="entry name" value="LIM_DOMAIN_1"/>
    <property type="match status" value="4"/>
</dbReference>
<dbReference type="PROSITE" id="PS50023">
    <property type="entry name" value="LIM_DOMAIN_2"/>
    <property type="match status" value="5"/>
</dbReference>
<reference key="1">
    <citation type="journal article" date="2003" name="Exp. Cell Res.">
        <title>PINCH2 is a new five LIM domain protein, homologous to PINCH and localized to focal adhesions.</title>
        <authorList>
            <person name="Braun A."/>
            <person name="Bordoy R."/>
            <person name="Stanchi F."/>
            <person name="Moser M."/>
            <person name="Kostka G."/>
            <person name="Ehler E."/>
            <person name="Brandau O."/>
            <person name="Faessler R."/>
        </authorList>
    </citation>
    <scope>NUCLEOTIDE SEQUENCE [GENOMIC DNA]</scope>
    <scope>SUBCELLULAR LOCATION</scope>
    <scope>TISSUE SPECIFICITY</scope>
</reference>
<reference key="2">
    <citation type="journal article" date="2004" name="Genome Res.">
        <title>The status, quality, and expansion of the NIH full-length cDNA project: the Mammalian Gene Collection (MGC).</title>
        <authorList>
            <consortium name="The MGC Project Team"/>
        </authorList>
    </citation>
    <scope>NUCLEOTIDE SEQUENCE [LARGE SCALE MRNA]</scope>
    <source>
        <strain>FVB/N</strain>
        <tissue>Liver</tissue>
    </source>
</reference>
<reference key="3">
    <citation type="journal article" date="2006" name="J. Biol. Chem.">
        <title>Oligomerizing potential of a focal adhesion LIM protein Hic-5 organizing a nuclear-cytoplasmic shuttling complex.</title>
        <authorList>
            <person name="Mori K."/>
            <person name="Asakawa M."/>
            <person name="Hayashi M."/>
            <person name="Imura M."/>
            <person name="Ohki T."/>
            <person name="Hirao E."/>
            <person name="Kim-Kaneyama J.-R."/>
            <person name="Nose K."/>
            <person name="Shibanuma M."/>
        </authorList>
    </citation>
    <scope>INTERACTION WITH TGFB1I1</scope>
</reference>
<reference key="4">
    <citation type="journal article" date="2010" name="Cell">
        <title>A tissue-specific atlas of mouse protein phosphorylation and expression.</title>
        <authorList>
            <person name="Huttlin E.L."/>
            <person name="Jedrychowski M.P."/>
            <person name="Elias J.E."/>
            <person name="Goswami T."/>
            <person name="Rad R."/>
            <person name="Beausoleil S.A."/>
            <person name="Villen J."/>
            <person name="Haas W."/>
            <person name="Sowa M.E."/>
            <person name="Gygi S.P."/>
        </authorList>
    </citation>
    <scope>IDENTIFICATION BY MASS SPECTROMETRY [LARGE SCALE ANALYSIS]</scope>
    <source>
        <tissue>Kidney</tissue>
        <tissue>Lung</tissue>
    </source>
</reference>
<gene>
    <name type="primary">Lims2</name>
    <name type="synonym">Pinch2</name>
</gene>
<feature type="chain" id="PRO_0000266012" description="LIM and senescent cell antigen-like-containing domain protein 2">
    <location>
        <begin position="1"/>
        <end position="341"/>
    </location>
</feature>
<feature type="domain" description="LIM zinc-binding 1" evidence="3">
    <location>
        <begin position="13"/>
        <end position="74"/>
    </location>
</feature>
<feature type="domain" description="LIM zinc-binding 2" evidence="3">
    <location>
        <begin position="76"/>
        <end position="133"/>
    </location>
</feature>
<feature type="domain" description="LIM zinc-binding 3" evidence="3">
    <location>
        <begin position="138"/>
        <end position="195"/>
    </location>
</feature>
<feature type="domain" description="LIM zinc-binding 4" evidence="3">
    <location>
        <begin position="196"/>
        <end position="255"/>
    </location>
</feature>
<feature type="domain" description="LIM zinc-binding 5" evidence="3">
    <location>
        <begin position="256"/>
        <end position="315"/>
    </location>
</feature>
<feature type="modified residue" description="Phosphoserine" evidence="2">
    <location>
        <position position="328"/>
    </location>
</feature>
<keyword id="KW-0965">Cell junction</keyword>
<keyword id="KW-1003">Cell membrane</keyword>
<keyword id="KW-0440">LIM domain</keyword>
<keyword id="KW-0472">Membrane</keyword>
<keyword id="KW-0479">Metal-binding</keyword>
<keyword id="KW-0597">Phosphoprotein</keyword>
<keyword id="KW-1185">Reference proteome</keyword>
<keyword id="KW-0677">Repeat</keyword>
<keyword id="KW-0862">Zinc</keyword>
<name>LIMS2_MOUSE</name>
<evidence type="ECO:0000250" key="1"/>
<evidence type="ECO:0000250" key="2">
    <source>
        <dbReference type="UniProtKB" id="Q7Z4I7"/>
    </source>
</evidence>
<evidence type="ECO:0000255" key="3">
    <source>
        <dbReference type="PROSITE-ProRule" id="PRU00125"/>
    </source>
</evidence>
<evidence type="ECO:0000269" key="4">
    <source>
    </source>
</evidence>
<evidence type="ECO:0000269" key="5">
    <source>
    </source>
</evidence>